<name>RPOZ_PARXL</name>
<gene>
    <name evidence="1" type="primary">rpoZ</name>
    <name type="ordered locus">Bxeno_A3501</name>
    <name type="ORF">Bxe_A0906</name>
</gene>
<feature type="chain" id="PRO_1000005905" description="DNA-directed RNA polymerase subunit omega">
    <location>
        <begin position="1"/>
        <end position="67"/>
    </location>
</feature>
<dbReference type="EC" id="2.7.7.6" evidence="1"/>
<dbReference type="EMBL" id="CP000270">
    <property type="protein sequence ID" value="ABE32039.1"/>
    <property type="molecule type" value="Genomic_DNA"/>
</dbReference>
<dbReference type="RefSeq" id="WP_006025620.1">
    <property type="nucleotide sequence ID" value="NZ_CP008760.1"/>
</dbReference>
<dbReference type="SMR" id="Q13V50"/>
<dbReference type="STRING" id="266265.Bxe_A0906"/>
<dbReference type="GeneID" id="98102617"/>
<dbReference type="KEGG" id="bxb:DR64_3068"/>
<dbReference type="KEGG" id="bxe:Bxe_A0906"/>
<dbReference type="eggNOG" id="COG1758">
    <property type="taxonomic scope" value="Bacteria"/>
</dbReference>
<dbReference type="OrthoDB" id="9796300at2"/>
<dbReference type="Proteomes" id="UP000001817">
    <property type="component" value="Chromosome 1"/>
</dbReference>
<dbReference type="GO" id="GO:0000428">
    <property type="term" value="C:DNA-directed RNA polymerase complex"/>
    <property type="evidence" value="ECO:0007669"/>
    <property type="project" value="UniProtKB-KW"/>
</dbReference>
<dbReference type="GO" id="GO:0003677">
    <property type="term" value="F:DNA binding"/>
    <property type="evidence" value="ECO:0007669"/>
    <property type="project" value="UniProtKB-UniRule"/>
</dbReference>
<dbReference type="GO" id="GO:0003899">
    <property type="term" value="F:DNA-directed RNA polymerase activity"/>
    <property type="evidence" value="ECO:0007669"/>
    <property type="project" value="UniProtKB-UniRule"/>
</dbReference>
<dbReference type="GO" id="GO:0006351">
    <property type="term" value="P:DNA-templated transcription"/>
    <property type="evidence" value="ECO:0007669"/>
    <property type="project" value="UniProtKB-UniRule"/>
</dbReference>
<dbReference type="Gene3D" id="3.90.940.10">
    <property type="match status" value="1"/>
</dbReference>
<dbReference type="HAMAP" id="MF_00366">
    <property type="entry name" value="RNApol_bact_RpoZ"/>
    <property type="match status" value="1"/>
</dbReference>
<dbReference type="InterPro" id="IPR003716">
    <property type="entry name" value="DNA-dir_RNA_pol_omega"/>
</dbReference>
<dbReference type="InterPro" id="IPR006110">
    <property type="entry name" value="Pol_omega/Rpo6/RPB6"/>
</dbReference>
<dbReference type="InterPro" id="IPR036161">
    <property type="entry name" value="RPB6/omega-like_sf"/>
</dbReference>
<dbReference type="NCBIfam" id="TIGR00690">
    <property type="entry name" value="rpoZ"/>
    <property type="match status" value="1"/>
</dbReference>
<dbReference type="PANTHER" id="PTHR34476">
    <property type="entry name" value="DNA-DIRECTED RNA POLYMERASE SUBUNIT OMEGA"/>
    <property type="match status" value="1"/>
</dbReference>
<dbReference type="PANTHER" id="PTHR34476:SF1">
    <property type="entry name" value="DNA-DIRECTED RNA POLYMERASE SUBUNIT OMEGA"/>
    <property type="match status" value="1"/>
</dbReference>
<dbReference type="Pfam" id="PF01192">
    <property type="entry name" value="RNA_pol_Rpb6"/>
    <property type="match status" value="1"/>
</dbReference>
<dbReference type="SMART" id="SM01409">
    <property type="entry name" value="RNA_pol_Rpb6"/>
    <property type="match status" value="1"/>
</dbReference>
<dbReference type="SUPFAM" id="SSF63562">
    <property type="entry name" value="RPB6/omega subunit-like"/>
    <property type="match status" value="1"/>
</dbReference>
<reference key="1">
    <citation type="journal article" date="2006" name="Proc. Natl. Acad. Sci. U.S.A.">
        <title>Burkholderia xenovorans LB400 harbors a multi-replicon, 9.73-Mbp genome shaped for versatility.</title>
        <authorList>
            <person name="Chain P.S.G."/>
            <person name="Denef V.J."/>
            <person name="Konstantinidis K.T."/>
            <person name="Vergez L.M."/>
            <person name="Agullo L."/>
            <person name="Reyes V.L."/>
            <person name="Hauser L."/>
            <person name="Cordova M."/>
            <person name="Gomez L."/>
            <person name="Gonzalez M."/>
            <person name="Land M."/>
            <person name="Lao V."/>
            <person name="Larimer F."/>
            <person name="LiPuma J.J."/>
            <person name="Mahenthiralingam E."/>
            <person name="Malfatti S.A."/>
            <person name="Marx C.J."/>
            <person name="Parnell J.J."/>
            <person name="Ramette A."/>
            <person name="Richardson P."/>
            <person name="Seeger M."/>
            <person name="Smith D."/>
            <person name="Spilker T."/>
            <person name="Sul W.J."/>
            <person name="Tsoi T.V."/>
            <person name="Ulrich L.E."/>
            <person name="Zhulin I.B."/>
            <person name="Tiedje J.M."/>
        </authorList>
    </citation>
    <scope>NUCLEOTIDE SEQUENCE [LARGE SCALE GENOMIC DNA]</scope>
    <source>
        <strain>LB400</strain>
    </source>
</reference>
<organism>
    <name type="scientific">Paraburkholderia xenovorans (strain LB400)</name>
    <dbReference type="NCBI Taxonomy" id="266265"/>
    <lineage>
        <taxon>Bacteria</taxon>
        <taxon>Pseudomonadati</taxon>
        <taxon>Pseudomonadota</taxon>
        <taxon>Betaproteobacteria</taxon>
        <taxon>Burkholderiales</taxon>
        <taxon>Burkholderiaceae</taxon>
        <taxon>Paraburkholderia</taxon>
    </lineage>
</organism>
<sequence>MARITVEDCLKQIPNRFELALAATYRARQLAQGHTPKIESRDKPTVVALREIAAGQVGVEMLKKVPV</sequence>
<protein>
    <recommendedName>
        <fullName evidence="1">DNA-directed RNA polymerase subunit omega</fullName>
        <shortName evidence="1">RNAP omega subunit</shortName>
        <ecNumber evidence="1">2.7.7.6</ecNumber>
    </recommendedName>
    <alternativeName>
        <fullName evidence="1">RNA polymerase omega subunit</fullName>
    </alternativeName>
    <alternativeName>
        <fullName evidence="1">Transcriptase subunit omega</fullName>
    </alternativeName>
</protein>
<keyword id="KW-0240">DNA-directed RNA polymerase</keyword>
<keyword id="KW-0548">Nucleotidyltransferase</keyword>
<keyword id="KW-1185">Reference proteome</keyword>
<keyword id="KW-0804">Transcription</keyword>
<keyword id="KW-0808">Transferase</keyword>
<proteinExistence type="inferred from homology"/>
<accession>Q13V50</accession>
<comment type="function">
    <text evidence="1">Promotes RNA polymerase assembly. Latches the N- and C-terminal regions of the beta' subunit thereby facilitating its interaction with the beta and alpha subunits.</text>
</comment>
<comment type="catalytic activity">
    <reaction evidence="1">
        <text>RNA(n) + a ribonucleoside 5'-triphosphate = RNA(n+1) + diphosphate</text>
        <dbReference type="Rhea" id="RHEA:21248"/>
        <dbReference type="Rhea" id="RHEA-COMP:14527"/>
        <dbReference type="Rhea" id="RHEA-COMP:17342"/>
        <dbReference type="ChEBI" id="CHEBI:33019"/>
        <dbReference type="ChEBI" id="CHEBI:61557"/>
        <dbReference type="ChEBI" id="CHEBI:140395"/>
        <dbReference type="EC" id="2.7.7.6"/>
    </reaction>
</comment>
<comment type="subunit">
    <text evidence="1">The RNAP catalytic core consists of 2 alpha, 1 beta, 1 beta' and 1 omega subunit. When a sigma factor is associated with the core the holoenzyme is formed, which can initiate transcription.</text>
</comment>
<comment type="similarity">
    <text evidence="1">Belongs to the RNA polymerase subunit omega family.</text>
</comment>
<evidence type="ECO:0000255" key="1">
    <source>
        <dbReference type="HAMAP-Rule" id="MF_00366"/>
    </source>
</evidence>